<proteinExistence type="inferred from homology"/>
<accession>Q2U6H2</accession>
<name>MAP2_ASPOR</name>
<dbReference type="EC" id="3.4.11.18" evidence="1"/>
<dbReference type="EMBL" id="BA000053">
    <property type="protein sequence ID" value="BAE62843.1"/>
    <property type="molecule type" value="Genomic_DNA"/>
</dbReference>
<dbReference type="RefSeq" id="XP_001823976.1">
    <property type="nucleotide sequence ID" value="XM_001823924.1"/>
</dbReference>
<dbReference type="SMR" id="Q2U6H2"/>
<dbReference type="STRING" id="510516.Q2U6H2"/>
<dbReference type="MEROPS" id="M24.002"/>
<dbReference type="EnsemblFungi" id="BAE62843">
    <property type="protein sequence ID" value="BAE62843"/>
    <property type="gene ID" value="AO090120000238"/>
</dbReference>
<dbReference type="GeneID" id="5996235"/>
<dbReference type="KEGG" id="aor:AO090120000238"/>
<dbReference type="VEuPathDB" id="FungiDB:AO090120000238"/>
<dbReference type="HOGENOM" id="CLU_015857_7_1_1"/>
<dbReference type="OMA" id="ILRYHIH"/>
<dbReference type="OrthoDB" id="65903at5052"/>
<dbReference type="Proteomes" id="UP000006564">
    <property type="component" value="Chromosome 5"/>
</dbReference>
<dbReference type="GO" id="GO:0005737">
    <property type="term" value="C:cytoplasm"/>
    <property type="evidence" value="ECO:0007669"/>
    <property type="project" value="UniProtKB-SubCell"/>
</dbReference>
<dbReference type="GO" id="GO:0004239">
    <property type="term" value="F:initiator methionyl aminopeptidase activity"/>
    <property type="evidence" value="ECO:0007669"/>
    <property type="project" value="UniProtKB-UniRule"/>
</dbReference>
<dbReference type="GO" id="GO:0046872">
    <property type="term" value="F:metal ion binding"/>
    <property type="evidence" value="ECO:0007669"/>
    <property type="project" value="UniProtKB-UniRule"/>
</dbReference>
<dbReference type="GO" id="GO:0070006">
    <property type="term" value="F:metalloaminopeptidase activity"/>
    <property type="evidence" value="ECO:0007669"/>
    <property type="project" value="UniProtKB-UniRule"/>
</dbReference>
<dbReference type="GO" id="GO:0006508">
    <property type="term" value="P:proteolysis"/>
    <property type="evidence" value="ECO:0007669"/>
    <property type="project" value="UniProtKB-KW"/>
</dbReference>
<dbReference type="CDD" id="cd01088">
    <property type="entry name" value="MetAP2"/>
    <property type="match status" value="1"/>
</dbReference>
<dbReference type="Gene3D" id="3.90.230.10">
    <property type="entry name" value="Creatinase/methionine aminopeptidase superfamily"/>
    <property type="match status" value="1"/>
</dbReference>
<dbReference type="Gene3D" id="1.10.10.10">
    <property type="entry name" value="Winged helix-like DNA-binding domain superfamily/Winged helix DNA-binding domain"/>
    <property type="match status" value="1"/>
</dbReference>
<dbReference type="HAMAP" id="MF_03175">
    <property type="entry name" value="MetAP_2_euk"/>
    <property type="match status" value="1"/>
</dbReference>
<dbReference type="InterPro" id="IPR036005">
    <property type="entry name" value="Creatinase/aminopeptidase-like"/>
</dbReference>
<dbReference type="InterPro" id="IPR050247">
    <property type="entry name" value="Met_Aminopeptidase_Type2"/>
</dbReference>
<dbReference type="InterPro" id="IPR000994">
    <property type="entry name" value="Pept_M24"/>
</dbReference>
<dbReference type="InterPro" id="IPR001714">
    <property type="entry name" value="Pept_M24_MAP"/>
</dbReference>
<dbReference type="InterPro" id="IPR002468">
    <property type="entry name" value="Pept_M24A_MAP2"/>
</dbReference>
<dbReference type="InterPro" id="IPR018349">
    <property type="entry name" value="Pept_M24A_MAP2_BS"/>
</dbReference>
<dbReference type="InterPro" id="IPR036388">
    <property type="entry name" value="WH-like_DNA-bd_sf"/>
</dbReference>
<dbReference type="InterPro" id="IPR036390">
    <property type="entry name" value="WH_DNA-bd_sf"/>
</dbReference>
<dbReference type="NCBIfam" id="TIGR00501">
    <property type="entry name" value="met_pdase_II"/>
    <property type="match status" value="1"/>
</dbReference>
<dbReference type="PANTHER" id="PTHR45777">
    <property type="entry name" value="METHIONINE AMINOPEPTIDASE 2"/>
    <property type="match status" value="1"/>
</dbReference>
<dbReference type="PANTHER" id="PTHR45777:SF1">
    <property type="entry name" value="METHIONINE AMINOPEPTIDASE 2-2"/>
    <property type="match status" value="1"/>
</dbReference>
<dbReference type="Pfam" id="PF00557">
    <property type="entry name" value="Peptidase_M24"/>
    <property type="match status" value="1"/>
</dbReference>
<dbReference type="PRINTS" id="PR00599">
    <property type="entry name" value="MAPEPTIDASE"/>
</dbReference>
<dbReference type="SUPFAM" id="SSF55920">
    <property type="entry name" value="Creatinase/aminopeptidase"/>
    <property type="match status" value="1"/>
</dbReference>
<dbReference type="SUPFAM" id="SSF46785">
    <property type="entry name" value="Winged helix' DNA-binding domain"/>
    <property type="match status" value="1"/>
</dbReference>
<dbReference type="PROSITE" id="PS01202">
    <property type="entry name" value="MAP_2"/>
    <property type="match status" value="1"/>
</dbReference>
<sequence length="468" mass="50724">MGSKTFEGEGQRGGNDPSNSTSPNSAGGEPRGAHLSRDGDGSLGDGDGDDGADGDEKDGAVTTTPLTEQQPSSETTSKKKKRRKPKKKISALKQSSPPRVPLDDLFPTGQFPVGETHEYGSVVEGTARTTSEEVRYLSRNYLQDDSVLTDYRKAAEIHRQVRHWTQENVRPGQTLTEIAVGIEDGVRALLDNAGLETGQCLQSGMGFPTGLALNDCVAHYTPNPGQKDIVLQASDVMKVDFGVHINGWIVDSAFTMSFDPTYDNLLAAVKDATNTGIKNAGIDVRISDVSAAIQEAMESYEVEIGGKVFPVKPVRDISGHNINRYQIHGGKSIPFVKNSSQTKMEEGEIFAIETFGSTGRGSTVEGFGVYGYGKDPNAPKKVSSPLASARSLYKTINENFGSIVFCRRYLERLGVERYLAGMNSLVNNGIVEQYAPLMDMKGSYSAQFEHTILLRESCKEVVSRGNDY</sequence>
<evidence type="ECO:0000255" key="1">
    <source>
        <dbReference type="HAMAP-Rule" id="MF_03175"/>
    </source>
</evidence>
<evidence type="ECO:0000256" key="2">
    <source>
        <dbReference type="SAM" id="MobiDB-lite"/>
    </source>
</evidence>
<feature type="chain" id="PRO_0000407643" description="Methionine aminopeptidase 2">
    <location>
        <begin position="1"/>
        <end position="468"/>
    </location>
</feature>
<feature type="region of interest" description="Disordered" evidence="2">
    <location>
        <begin position="1"/>
        <end position="106"/>
    </location>
</feature>
<feature type="compositionally biased region" description="Basic and acidic residues" evidence="2">
    <location>
        <begin position="1"/>
        <end position="10"/>
    </location>
</feature>
<feature type="compositionally biased region" description="Polar residues" evidence="2">
    <location>
        <begin position="16"/>
        <end position="25"/>
    </location>
</feature>
<feature type="compositionally biased region" description="Basic and acidic residues" evidence="2">
    <location>
        <begin position="31"/>
        <end position="40"/>
    </location>
</feature>
<feature type="compositionally biased region" description="Acidic residues" evidence="2">
    <location>
        <begin position="46"/>
        <end position="56"/>
    </location>
</feature>
<feature type="compositionally biased region" description="Polar residues" evidence="2">
    <location>
        <begin position="61"/>
        <end position="75"/>
    </location>
</feature>
<feature type="compositionally biased region" description="Basic residues" evidence="2">
    <location>
        <begin position="78"/>
        <end position="90"/>
    </location>
</feature>
<feature type="binding site" evidence="1">
    <location>
        <position position="219"/>
    </location>
    <ligand>
        <name>substrate</name>
    </ligand>
</feature>
<feature type="binding site" evidence="1">
    <location>
        <position position="240"/>
    </location>
    <ligand>
        <name>a divalent metal cation</name>
        <dbReference type="ChEBI" id="CHEBI:60240"/>
        <label>1</label>
    </ligand>
</feature>
<feature type="binding site" evidence="1">
    <location>
        <position position="251"/>
    </location>
    <ligand>
        <name>a divalent metal cation</name>
        <dbReference type="ChEBI" id="CHEBI:60240"/>
        <label>1</label>
    </ligand>
</feature>
<feature type="binding site" evidence="1">
    <location>
        <position position="251"/>
    </location>
    <ligand>
        <name>a divalent metal cation</name>
        <dbReference type="ChEBI" id="CHEBI:60240"/>
        <label>2</label>
        <note>catalytic</note>
    </ligand>
</feature>
<feature type="binding site" evidence="1">
    <location>
        <position position="320"/>
    </location>
    <ligand>
        <name>a divalent metal cation</name>
        <dbReference type="ChEBI" id="CHEBI:60240"/>
        <label>2</label>
        <note>catalytic</note>
    </ligand>
</feature>
<feature type="binding site" evidence="1">
    <location>
        <position position="328"/>
    </location>
    <ligand>
        <name>substrate</name>
    </ligand>
</feature>
<feature type="binding site" evidence="1">
    <location>
        <position position="353"/>
    </location>
    <ligand>
        <name>a divalent metal cation</name>
        <dbReference type="ChEBI" id="CHEBI:60240"/>
        <label>2</label>
        <note>catalytic</note>
    </ligand>
</feature>
<feature type="binding site" evidence="1">
    <location>
        <position position="449"/>
    </location>
    <ligand>
        <name>a divalent metal cation</name>
        <dbReference type="ChEBI" id="CHEBI:60240"/>
        <label>1</label>
    </ligand>
</feature>
<feature type="binding site" evidence="1">
    <location>
        <position position="449"/>
    </location>
    <ligand>
        <name>a divalent metal cation</name>
        <dbReference type="ChEBI" id="CHEBI:60240"/>
        <label>2</label>
        <note>catalytic</note>
    </ligand>
</feature>
<organism>
    <name type="scientific">Aspergillus oryzae (strain ATCC 42149 / RIB 40)</name>
    <name type="common">Yellow koji mold</name>
    <dbReference type="NCBI Taxonomy" id="510516"/>
    <lineage>
        <taxon>Eukaryota</taxon>
        <taxon>Fungi</taxon>
        <taxon>Dikarya</taxon>
        <taxon>Ascomycota</taxon>
        <taxon>Pezizomycotina</taxon>
        <taxon>Eurotiomycetes</taxon>
        <taxon>Eurotiomycetidae</taxon>
        <taxon>Eurotiales</taxon>
        <taxon>Aspergillaceae</taxon>
        <taxon>Aspergillus</taxon>
        <taxon>Aspergillus subgen. Circumdati</taxon>
    </lineage>
</organism>
<comment type="function">
    <text evidence="1">Cotranslationally removes the N-terminal methionine from nascent proteins. The N-terminal methionine is often cleaved when the second residue in the primary sequence is small and uncharged (Met-Ala-, Cys, Gly, Pro, Ser, Thr, or Val).</text>
</comment>
<comment type="catalytic activity">
    <reaction evidence="1">
        <text>Release of N-terminal amino acids, preferentially methionine, from peptides and arylamides.</text>
        <dbReference type="EC" id="3.4.11.18"/>
    </reaction>
</comment>
<comment type="cofactor">
    <cofactor evidence="1">
        <name>Co(2+)</name>
        <dbReference type="ChEBI" id="CHEBI:48828"/>
    </cofactor>
    <cofactor evidence="1">
        <name>Zn(2+)</name>
        <dbReference type="ChEBI" id="CHEBI:29105"/>
    </cofactor>
    <cofactor evidence="1">
        <name>Mn(2+)</name>
        <dbReference type="ChEBI" id="CHEBI:29035"/>
    </cofactor>
    <cofactor evidence="1">
        <name>Fe(2+)</name>
        <dbReference type="ChEBI" id="CHEBI:29033"/>
    </cofactor>
    <text evidence="1">Binds 2 divalent metal cations per subunit. Has a high-affinity and a low affinity metal-binding site. The true nature of the physiological cofactor is under debate. The enzyme is active with cobalt, zinc, manganese or divalent iron ions. Most likely, methionine aminopeptidases function as mononuclear Fe(2+)-metalloproteases under physiological conditions, and the catalytically relevant metal-binding site has been assigned to the histidine-containing high-affinity site.</text>
</comment>
<comment type="subcellular location">
    <subcellularLocation>
        <location evidence="1">Cytoplasm</location>
    </subcellularLocation>
</comment>
<comment type="similarity">
    <text evidence="1">Belongs to the peptidase M24A family. Methionine aminopeptidase eukaryotic type 2 subfamily.</text>
</comment>
<gene>
    <name type="ORF">AO090120000238</name>
</gene>
<protein>
    <recommendedName>
        <fullName evidence="1">Methionine aminopeptidase 2</fullName>
        <shortName evidence="1">MAP 2</shortName>
        <shortName evidence="1">MetAP 2</shortName>
        <ecNumber evidence="1">3.4.11.18</ecNumber>
    </recommendedName>
    <alternativeName>
        <fullName evidence="1">Peptidase M</fullName>
    </alternativeName>
</protein>
<keyword id="KW-0031">Aminopeptidase</keyword>
<keyword id="KW-0963">Cytoplasm</keyword>
<keyword id="KW-0378">Hydrolase</keyword>
<keyword id="KW-0479">Metal-binding</keyword>
<keyword id="KW-0645">Protease</keyword>
<keyword id="KW-1185">Reference proteome</keyword>
<reference key="1">
    <citation type="journal article" date="2005" name="Nature">
        <title>Genome sequencing and analysis of Aspergillus oryzae.</title>
        <authorList>
            <person name="Machida M."/>
            <person name="Asai K."/>
            <person name="Sano M."/>
            <person name="Tanaka T."/>
            <person name="Kumagai T."/>
            <person name="Terai G."/>
            <person name="Kusumoto K."/>
            <person name="Arima T."/>
            <person name="Akita O."/>
            <person name="Kashiwagi Y."/>
            <person name="Abe K."/>
            <person name="Gomi K."/>
            <person name="Horiuchi H."/>
            <person name="Kitamoto K."/>
            <person name="Kobayashi T."/>
            <person name="Takeuchi M."/>
            <person name="Denning D.W."/>
            <person name="Galagan J.E."/>
            <person name="Nierman W.C."/>
            <person name="Yu J."/>
            <person name="Archer D.B."/>
            <person name="Bennett J.W."/>
            <person name="Bhatnagar D."/>
            <person name="Cleveland T.E."/>
            <person name="Fedorova N.D."/>
            <person name="Gotoh O."/>
            <person name="Horikawa H."/>
            <person name="Hosoyama A."/>
            <person name="Ichinomiya M."/>
            <person name="Igarashi R."/>
            <person name="Iwashita K."/>
            <person name="Juvvadi P.R."/>
            <person name="Kato M."/>
            <person name="Kato Y."/>
            <person name="Kin T."/>
            <person name="Kokubun A."/>
            <person name="Maeda H."/>
            <person name="Maeyama N."/>
            <person name="Maruyama J."/>
            <person name="Nagasaki H."/>
            <person name="Nakajima T."/>
            <person name="Oda K."/>
            <person name="Okada K."/>
            <person name="Paulsen I."/>
            <person name="Sakamoto K."/>
            <person name="Sawano T."/>
            <person name="Takahashi M."/>
            <person name="Takase K."/>
            <person name="Terabayashi Y."/>
            <person name="Wortman J.R."/>
            <person name="Yamada O."/>
            <person name="Yamagata Y."/>
            <person name="Anazawa H."/>
            <person name="Hata Y."/>
            <person name="Koide Y."/>
            <person name="Komori T."/>
            <person name="Koyama Y."/>
            <person name="Minetoki T."/>
            <person name="Suharnan S."/>
            <person name="Tanaka A."/>
            <person name="Isono K."/>
            <person name="Kuhara S."/>
            <person name="Ogasawara N."/>
            <person name="Kikuchi H."/>
        </authorList>
    </citation>
    <scope>NUCLEOTIDE SEQUENCE [LARGE SCALE GENOMIC DNA]</scope>
    <source>
        <strain>ATCC 42149 / RIB 40</strain>
    </source>
</reference>